<comment type="function">
    <text evidence="1">Component of the eukaryotic translation initiation factor 3 (eIF-3) complex, which is involved in protein synthesis of a specialized repertoire of mRNAs and, together with other initiation factors, stimulates binding of mRNA and methionyl-tRNAi to the 40S ribosome. The eIF-3 complex specifically targets and initiates translation of a subset of mRNAs involved in cell proliferation.</text>
</comment>
<comment type="subunit">
    <text evidence="1">Component of the eukaryotic translation initiation factor 3 (eIF-3) complex.</text>
</comment>
<comment type="subcellular location">
    <subcellularLocation>
        <location evidence="1">Cytoplasm</location>
    </subcellularLocation>
</comment>
<comment type="similarity">
    <text evidence="1">Belongs to the eIF-3 subunit M family.</text>
</comment>
<feature type="chain" id="PRO_0000366013" description="Eukaryotic translation initiation factor 3 subunit M">
    <location>
        <begin position="1"/>
        <end position="468"/>
    </location>
</feature>
<feature type="domain" description="PCI" evidence="2">
    <location>
        <begin position="206"/>
        <end position="377"/>
    </location>
</feature>
<feature type="region of interest" description="Disordered" evidence="3">
    <location>
        <begin position="40"/>
        <end position="61"/>
    </location>
</feature>
<feature type="region of interest" description="Disordered" evidence="3">
    <location>
        <begin position="419"/>
        <end position="468"/>
    </location>
</feature>
<feature type="compositionally biased region" description="Basic and acidic residues" evidence="3">
    <location>
        <begin position="430"/>
        <end position="442"/>
    </location>
</feature>
<feature type="compositionally biased region" description="Low complexity" evidence="3">
    <location>
        <begin position="444"/>
        <end position="457"/>
    </location>
</feature>
<proteinExistence type="inferred from homology"/>
<keyword id="KW-0963">Cytoplasm</keyword>
<keyword id="KW-0396">Initiation factor</keyword>
<keyword id="KW-0648">Protein biosynthesis</keyword>
<keyword id="KW-1185">Reference proteome</keyword>
<organism>
    <name type="scientific">Aspergillus fumigatus (strain ATCC MYA-4609 / CBS 101355 / FGSC A1100 / Af293)</name>
    <name type="common">Neosartorya fumigata</name>
    <dbReference type="NCBI Taxonomy" id="330879"/>
    <lineage>
        <taxon>Eukaryota</taxon>
        <taxon>Fungi</taxon>
        <taxon>Dikarya</taxon>
        <taxon>Ascomycota</taxon>
        <taxon>Pezizomycotina</taxon>
        <taxon>Eurotiomycetes</taxon>
        <taxon>Eurotiomycetidae</taxon>
        <taxon>Eurotiales</taxon>
        <taxon>Aspergillaceae</taxon>
        <taxon>Aspergillus</taxon>
        <taxon>Aspergillus subgen. Fumigati</taxon>
    </lineage>
</organism>
<name>EIF3M_ASPFU</name>
<evidence type="ECO:0000255" key="1">
    <source>
        <dbReference type="HAMAP-Rule" id="MF_03012"/>
    </source>
</evidence>
<evidence type="ECO:0000255" key="2">
    <source>
        <dbReference type="PROSITE-ProRule" id="PRU01185"/>
    </source>
</evidence>
<evidence type="ECO:0000256" key="3">
    <source>
        <dbReference type="SAM" id="MobiDB-lite"/>
    </source>
</evidence>
<accession>Q4WG69</accession>
<reference key="1">
    <citation type="journal article" date="2005" name="Nature">
        <title>Genomic sequence of the pathogenic and allergenic filamentous fungus Aspergillus fumigatus.</title>
        <authorList>
            <person name="Nierman W.C."/>
            <person name="Pain A."/>
            <person name="Anderson M.J."/>
            <person name="Wortman J.R."/>
            <person name="Kim H.S."/>
            <person name="Arroyo J."/>
            <person name="Berriman M."/>
            <person name="Abe K."/>
            <person name="Archer D.B."/>
            <person name="Bermejo C."/>
            <person name="Bennett J.W."/>
            <person name="Bowyer P."/>
            <person name="Chen D."/>
            <person name="Collins M."/>
            <person name="Coulsen R."/>
            <person name="Davies R."/>
            <person name="Dyer P.S."/>
            <person name="Farman M.L."/>
            <person name="Fedorova N."/>
            <person name="Fedorova N.D."/>
            <person name="Feldblyum T.V."/>
            <person name="Fischer R."/>
            <person name="Fosker N."/>
            <person name="Fraser A."/>
            <person name="Garcia J.L."/>
            <person name="Garcia M.J."/>
            <person name="Goble A."/>
            <person name="Goldman G.H."/>
            <person name="Gomi K."/>
            <person name="Griffith-Jones S."/>
            <person name="Gwilliam R."/>
            <person name="Haas B.J."/>
            <person name="Haas H."/>
            <person name="Harris D.E."/>
            <person name="Horiuchi H."/>
            <person name="Huang J."/>
            <person name="Humphray S."/>
            <person name="Jimenez J."/>
            <person name="Keller N."/>
            <person name="Khouri H."/>
            <person name="Kitamoto K."/>
            <person name="Kobayashi T."/>
            <person name="Konzack S."/>
            <person name="Kulkarni R."/>
            <person name="Kumagai T."/>
            <person name="Lafton A."/>
            <person name="Latge J.-P."/>
            <person name="Li W."/>
            <person name="Lord A."/>
            <person name="Lu C."/>
            <person name="Majoros W.H."/>
            <person name="May G.S."/>
            <person name="Miller B.L."/>
            <person name="Mohamoud Y."/>
            <person name="Molina M."/>
            <person name="Monod M."/>
            <person name="Mouyna I."/>
            <person name="Mulligan S."/>
            <person name="Murphy L.D."/>
            <person name="O'Neil S."/>
            <person name="Paulsen I."/>
            <person name="Penalva M.A."/>
            <person name="Pertea M."/>
            <person name="Price C."/>
            <person name="Pritchard B.L."/>
            <person name="Quail M.A."/>
            <person name="Rabbinowitsch E."/>
            <person name="Rawlins N."/>
            <person name="Rajandream M.A."/>
            <person name="Reichard U."/>
            <person name="Renauld H."/>
            <person name="Robson G.D."/>
            <person name="Rodriguez de Cordoba S."/>
            <person name="Rodriguez-Pena J.M."/>
            <person name="Ronning C.M."/>
            <person name="Rutter S."/>
            <person name="Salzberg S.L."/>
            <person name="Sanchez M."/>
            <person name="Sanchez-Ferrero J.C."/>
            <person name="Saunders D."/>
            <person name="Seeger K."/>
            <person name="Squares R."/>
            <person name="Squares S."/>
            <person name="Takeuchi M."/>
            <person name="Tekaia F."/>
            <person name="Turner G."/>
            <person name="Vazquez de Aldana C.R."/>
            <person name="Weidman J."/>
            <person name="White O."/>
            <person name="Woodward J.R."/>
            <person name="Yu J.-H."/>
            <person name="Fraser C.M."/>
            <person name="Galagan J.E."/>
            <person name="Asai K."/>
            <person name="Machida M."/>
            <person name="Hall N."/>
            <person name="Barrell B.G."/>
            <person name="Denning D.W."/>
        </authorList>
    </citation>
    <scope>NUCLEOTIDE SEQUENCE [LARGE SCALE GENOMIC DNA]</scope>
    <source>
        <strain>ATCC MYA-4609 / CBS 101355 / FGSC A1100 / Af293</strain>
    </source>
</reference>
<protein>
    <recommendedName>
        <fullName evidence="1">Eukaryotic translation initiation factor 3 subunit M</fullName>
        <shortName evidence="1">eIF3m</shortName>
    </recommendedName>
</protein>
<sequence>MPAPTTTLLIEGSFTELADEFAQYIDALRKNEGASLQSEVAPLIEPLRQQEQSEEEPDRKQRDEVLKKLVGAAAVLNAAPEREIISAYNLLVHLVHQASNPDIFLSRICTYLAKPITTSPQFGPTLAISILTTIFNTLAPTDSSRFHVLLAIVAVIRQSGSSYAFEALKPQLAAQLPTWLSAWELDDEDAQKLHLAIADAAQASGDLELAQTHVVQALQTIPANESSSKEARDLAVRALTSALKSPAVFDFTSLTAADAIQALRSSDSTLFELLEIFTADTLDAYEDFIAATPLETISGGVLVDGAEALQTKMRLLTLASLAASTPSRSLPYTTIASALRVPVEDVEKWVIDTIRAGLVEGKLSQLRSEFLVHRATYRVFGEKQWAEVQGRLMVWRRSLESVLGVLRTERERYIRESMQAAAEEVGQGKSGDKGAKGGDRRRNPQQQQQSQPSQPQQAREVELVGGAE</sequence>
<dbReference type="EMBL" id="AAHF01000009">
    <property type="protein sequence ID" value="EAL87072.1"/>
    <property type="molecule type" value="Genomic_DNA"/>
</dbReference>
<dbReference type="RefSeq" id="XP_749110.1">
    <property type="nucleotide sequence ID" value="XM_744017.1"/>
</dbReference>
<dbReference type="SMR" id="Q4WG69"/>
<dbReference type="STRING" id="330879.Q4WG69"/>
<dbReference type="EnsemblFungi" id="EAL87072">
    <property type="protein sequence ID" value="EAL87072"/>
    <property type="gene ID" value="AFUA_7G03980"/>
</dbReference>
<dbReference type="GeneID" id="3506428"/>
<dbReference type="KEGG" id="afm:AFUA_7G03980"/>
<dbReference type="VEuPathDB" id="FungiDB:Afu7g03980"/>
<dbReference type="eggNOG" id="KOG2753">
    <property type="taxonomic scope" value="Eukaryota"/>
</dbReference>
<dbReference type="HOGENOM" id="CLU_035254_0_1_1"/>
<dbReference type="InParanoid" id="Q4WG69"/>
<dbReference type="OMA" id="FNDEHKG"/>
<dbReference type="OrthoDB" id="10267031at2759"/>
<dbReference type="Proteomes" id="UP000002530">
    <property type="component" value="Chromosome 7"/>
</dbReference>
<dbReference type="GO" id="GO:0016282">
    <property type="term" value="C:eukaryotic 43S preinitiation complex"/>
    <property type="evidence" value="ECO:0007669"/>
    <property type="project" value="UniProtKB-UniRule"/>
</dbReference>
<dbReference type="GO" id="GO:0033290">
    <property type="term" value="C:eukaryotic 48S preinitiation complex"/>
    <property type="evidence" value="ECO:0007669"/>
    <property type="project" value="UniProtKB-UniRule"/>
</dbReference>
<dbReference type="GO" id="GO:0005852">
    <property type="term" value="C:eukaryotic translation initiation factor 3 complex"/>
    <property type="evidence" value="ECO:0000318"/>
    <property type="project" value="GO_Central"/>
</dbReference>
<dbReference type="GO" id="GO:0071541">
    <property type="term" value="C:eukaryotic translation initiation factor 3 complex, eIF3m"/>
    <property type="evidence" value="ECO:0007669"/>
    <property type="project" value="UniProtKB-UniRule"/>
</dbReference>
<dbReference type="GO" id="GO:0003743">
    <property type="term" value="F:translation initiation factor activity"/>
    <property type="evidence" value="ECO:0007669"/>
    <property type="project" value="UniProtKB-UniRule"/>
</dbReference>
<dbReference type="GO" id="GO:0002183">
    <property type="term" value="P:cytoplasmic translational initiation"/>
    <property type="evidence" value="ECO:0000318"/>
    <property type="project" value="GO_Central"/>
</dbReference>
<dbReference type="GO" id="GO:0001732">
    <property type="term" value="P:formation of cytoplasmic translation initiation complex"/>
    <property type="evidence" value="ECO:0007669"/>
    <property type="project" value="UniProtKB-UniRule"/>
</dbReference>
<dbReference type="HAMAP" id="MF_03012">
    <property type="entry name" value="eIF3m"/>
    <property type="match status" value="1"/>
</dbReference>
<dbReference type="InterPro" id="IPR045237">
    <property type="entry name" value="COPS7/eIF3m"/>
</dbReference>
<dbReference type="InterPro" id="IPR027528">
    <property type="entry name" value="eIF3m"/>
</dbReference>
<dbReference type="InterPro" id="IPR040750">
    <property type="entry name" value="eIF3m_C_helix"/>
</dbReference>
<dbReference type="InterPro" id="IPR000717">
    <property type="entry name" value="PCI_dom"/>
</dbReference>
<dbReference type="PANTHER" id="PTHR15350">
    <property type="entry name" value="COP9 SIGNALOSOME COMPLEX SUBUNIT 7/DENDRITIC CELL PROTEIN GA17"/>
    <property type="match status" value="1"/>
</dbReference>
<dbReference type="PANTHER" id="PTHR15350:SF2">
    <property type="entry name" value="EUKARYOTIC TRANSLATION INITIATION FACTOR 3 SUBUNIT M"/>
    <property type="match status" value="1"/>
</dbReference>
<dbReference type="Pfam" id="PF18005">
    <property type="entry name" value="eIF3m_C_helix"/>
    <property type="match status" value="1"/>
</dbReference>
<dbReference type="Pfam" id="PF01399">
    <property type="entry name" value="PCI"/>
    <property type="match status" value="1"/>
</dbReference>
<dbReference type="SMART" id="SM00088">
    <property type="entry name" value="PINT"/>
    <property type="match status" value="1"/>
</dbReference>
<dbReference type="PROSITE" id="PS50250">
    <property type="entry name" value="PCI"/>
    <property type="match status" value="1"/>
</dbReference>
<gene>
    <name type="ORF">AFUA_7G03980</name>
</gene>